<accession>P37028</accession>
<accession>P77436</accession>
<feature type="signal peptide" evidence="2">
    <location>
        <begin position="1"/>
        <end position="22"/>
    </location>
</feature>
<feature type="chain" id="PRO_0000003497" description="Vitamin B12-binding protein">
    <location>
        <begin position="23"/>
        <end position="266"/>
    </location>
</feature>
<feature type="domain" description="Fe/B12 periplasmic-binding" evidence="1">
    <location>
        <begin position="25"/>
        <end position="266"/>
    </location>
</feature>
<feature type="binding site" evidence="1 3 8">
    <location>
        <position position="50"/>
    </location>
    <ligand>
        <name>cyanocob(III)alamin</name>
        <dbReference type="ChEBI" id="CHEBI:17439"/>
    </ligand>
</feature>
<feature type="binding site" evidence="1 3 4 7 8">
    <location>
        <begin position="242"/>
        <end position="246"/>
    </location>
    <ligand>
        <name>cyanocob(III)alamin</name>
        <dbReference type="ChEBI" id="CHEBI:17439"/>
    </ligand>
</feature>
<feature type="site" description="Important for BtuC binding" evidence="1 6">
    <location>
        <position position="72"/>
    </location>
</feature>
<feature type="site" description="Important for BtuC binding" evidence="1 6">
    <location>
        <position position="202"/>
    </location>
</feature>
<feature type="disulfide bond">
    <location>
        <begin position="183"/>
        <end position="259"/>
    </location>
</feature>
<feature type="sequence conflict" description="In Ref. 1." evidence="5" ref="1">
    <original>S</original>
    <variation>L</variation>
    <location>
        <position position="208"/>
    </location>
</feature>
<feature type="strand" evidence="12">
    <location>
        <begin position="26"/>
        <end position="28"/>
    </location>
</feature>
<feature type="helix" evidence="12">
    <location>
        <begin position="31"/>
        <end position="39"/>
    </location>
</feature>
<feature type="strand" evidence="12">
    <location>
        <begin position="45"/>
        <end position="48"/>
    </location>
</feature>
<feature type="helix" evidence="12">
    <location>
        <begin position="55"/>
        <end position="59"/>
    </location>
</feature>
<feature type="strand" evidence="12">
    <location>
        <begin position="62"/>
        <end position="65"/>
    </location>
</feature>
<feature type="helix" evidence="12">
    <location>
        <begin position="71"/>
        <end position="76"/>
    </location>
</feature>
<feature type="strand" evidence="12">
    <location>
        <begin position="80"/>
        <end position="84"/>
    </location>
</feature>
<feature type="turn" evidence="12">
    <location>
        <begin position="86"/>
        <end position="88"/>
    </location>
</feature>
<feature type="helix" evidence="12">
    <location>
        <begin position="91"/>
        <end position="99"/>
    </location>
</feature>
<feature type="strand" evidence="12">
    <location>
        <begin position="104"/>
        <end position="106"/>
    </location>
</feature>
<feature type="helix" evidence="12">
    <location>
        <begin position="112"/>
        <end position="122"/>
    </location>
</feature>
<feature type="helix" evidence="12">
    <location>
        <begin position="123"/>
        <end position="125"/>
    </location>
</feature>
<feature type="strand" evidence="11">
    <location>
        <begin position="126"/>
        <end position="128"/>
    </location>
</feature>
<feature type="helix" evidence="12">
    <location>
        <begin position="129"/>
        <end position="150"/>
    </location>
</feature>
<feature type="strand" evidence="15">
    <location>
        <begin position="151"/>
        <end position="153"/>
    </location>
</feature>
<feature type="strand" evidence="12">
    <location>
        <begin position="156"/>
        <end position="162"/>
    </location>
</feature>
<feature type="strand" evidence="12">
    <location>
        <begin position="164"/>
        <end position="166"/>
    </location>
</feature>
<feature type="strand" evidence="13">
    <location>
        <begin position="172"/>
        <end position="174"/>
    </location>
</feature>
<feature type="helix" evidence="12">
    <location>
        <begin position="175"/>
        <end position="182"/>
    </location>
</feature>
<feature type="strand" evidence="12">
    <location>
        <begin position="185"/>
        <end position="187"/>
    </location>
</feature>
<feature type="turn" evidence="12">
    <location>
        <begin position="188"/>
        <end position="191"/>
    </location>
</feature>
<feature type="strand" evidence="12">
    <location>
        <begin position="193"/>
        <end position="196"/>
    </location>
</feature>
<feature type="helix" evidence="12">
    <location>
        <begin position="201"/>
        <end position="206"/>
    </location>
</feature>
<feature type="strand" evidence="12">
    <location>
        <begin position="210"/>
        <end position="215"/>
    </location>
</feature>
<feature type="helix" evidence="10">
    <location>
        <begin position="218"/>
        <end position="220"/>
    </location>
</feature>
<feature type="helix" evidence="10">
    <location>
        <begin position="221"/>
        <end position="228"/>
    </location>
</feature>
<feature type="helix" evidence="11">
    <location>
        <begin position="229"/>
        <end position="231"/>
    </location>
</feature>
<feature type="strand" evidence="12">
    <location>
        <begin position="236"/>
        <end position="238"/>
    </location>
</feature>
<feature type="helix" evidence="12">
    <location>
        <begin position="241"/>
        <end position="244"/>
    </location>
</feature>
<feature type="strand" evidence="14">
    <location>
        <begin position="245"/>
        <end position="248"/>
    </location>
</feature>
<feature type="helix" evidence="12">
    <location>
        <begin position="251"/>
        <end position="262"/>
    </location>
</feature>
<protein>
    <recommendedName>
        <fullName evidence="1">Vitamin B12-binding protein</fullName>
    </recommendedName>
</protein>
<name>BTUF_ECOLI</name>
<proteinExistence type="evidence at protein level"/>
<dbReference type="EMBL" id="U70214">
    <property type="protein sequence ID" value="AAB08588.1"/>
    <property type="molecule type" value="Genomic_DNA"/>
</dbReference>
<dbReference type="EMBL" id="U00096">
    <property type="protein sequence ID" value="AAC73269.1"/>
    <property type="molecule type" value="Genomic_DNA"/>
</dbReference>
<dbReference type="EMBL" id="AP009048">
    <property type="protein sequence ID" value="BAB96735.2"/>
    <property type="molecule type" value="Genomic_DNA"/>
</dbReference>
<dbReference type="PIR" id="F64739">
    <property type="entry name" value="F64739"/>
</dbReference>
<dbReference type="RefSeq" id="NP_414700.1">
    <property type="nucleotide sequence ID" value="NC_000913.3"/>
</dbReference>
<dbReference type="RefSeq" id="WP_001129927.1">
    <property type="nucleotide sequence ID" value="NZ_STEB01000032.1"/>
</dbReference>
<dbReference type="PDB" id="1N2Z">
    <property type="method" value="X-ray"/>
    <property type="resolution" value="2.00 A"/>
    <property type="chains" value="A/B=22-266"/>
</dbReference>
<dbReference type="PDB" id="1N4A">
    <property type="method" value="X-ray"/>
    <property type="resolution" value="2.00 A"/>
    <property type="chains" value="A/B=23-266"/>
</dbReference>
<dbReference type="PDB" id="1N4D">
    <property type="method" value="X-ray"/>
    <property type="resolution" value="3.00 A"/>
    <property type="chains" value="A/B=23-266"/>
</dbReference>
<dbReference type="PDB" id="2QI9">
    <property type="method" value="X-ray"/>
    <property type="resolution" value="2.60 A"/>
    <property type="chains" value="F=22-266"/>
</dbReference>
<dbReference type="PDB" id="4DBL">
    <property type="method" value="X-ray"/>
    <property type="resolution" value="3.49 A"/>
    <property type="chains" value="E/J=22-266"/>
</dbReference>
<dbReference type="PDB" id="4FI3">
    <property type="method" value="X-ray"/>
    <property type="resolution" value="3.47 A"/>
    <property type="chains" value="F=22-266"/>
</dbReference>
<dbReference type="PDB" id="5M29">
    <property type="method" value="X-ray"/>
    <property type="resolution" value="1.50 A"/>
    <property type="chains" value="A/B=22-266"/>
</dbReference>
<dbReference type="PDB" id="5M2Q">
    <property type="method" value="X-ray"/>
    <property type="resolution" value="1.70 A"/>
    <property type="chains" value="A/B=22-266"/>
</dbReference>
<dbReference type="PDB" id="5M34">
    <property type="method" value="X-ray"/>
    <property type="resolution" value="1.60 A"/>
    <property type="chains" value="A/B=22-266"/>
</dbReference>
<dbReference type="PDB" id="5M3B">
    <property type="method" value="X-ray"/>
    <property type="resolution" value="1.50 A"/>
    <property type="chains" value="A/B=22-266"/>
</dbReference>
<dbReference type="PDB" id="5OVW">
    <property type="method" value="X-ray"/>
    <property type="resolution" value="2.65 A"/>
    <property type="chains" value="A/B/C/D/E/F=22-266"/>
</dbReference>
<dbReference type="PDBsum" id="1N2Z"/>
<dbReference type="PDBsum" id="1N4A"/>
<dbReference type="PDBsum" id="1N4D"/>
<dbReference type="PDBsum" id="2QI9"/>
<dbReference type="PDBsum" id="4DBL"/>
<dbReference type="PDBsum" id="4FI3"/>
<dbReference type="PDBsum" id="5M29"/>
<dbReference type="PDBsum" id="5M2Q"/>
<dbReference type="PDBsum" id="5M34"/>
<dbReference type="PDBsum" id="5M3B"/>
<dbReference type="PDBsum" id="5OVW"/>
<dbReference type="SMR" id="P37028"/>
<dbReference type="BioGRID" id="4261861">
    <property type="interactions" value="283"/>
</dbReference>
<dbReference type="ComplexPortal" id="CPX-2105">
    <property type="entry name" value="Cobalamin ABC transporter complex"/>
</dbReference>
<dbReference type="DIP" id="DIP-11194N"/>
<dbReference type="FunCoup" id="P37028">
    <property type="interactions" value="395"/>
</dbReference>
<dbReference type="IntAct" id="P37028">
    <property type="interactions" value="5"/>
</dbReference>
<dbReference type="MINT" id="P37028"/>
<dbReference type="STRING" id="511145.b0158"/>
<dbReference type="jPOST" id="P37028"/>
<dbReference type="PaxDb" id="511145-b0158"/>
<dbReference type="ABCD" id="P37028">
    <property type="antibodies" value="7 sequenced antibodies"/>
</dbReference>
<dbReference type="EnsemblBacteria" id="AAC73269">
    <property type="protein sequence ID" value="AAC73269"/>
    <property type="gene ID" value="b0158"/>
</dbReference>
<dbReference type="GeneID" id="93777268"/>
<dbReference type="GeneID" id="947574"/>
<dbReference type="KEGG" id="ecj:JW0154"/>
<dbReference type="KEGG" id="eco:b0158"/>
<dbReference type="KEGG" id="ecoc:C3026_00720"/>
<dbReference type="PATRIC" id="fig|1411691.4.peg.2122"/>
<dbReference type="EchoBASE" id="EB2238"/>
<dbReference type="eggNOG" id="COG0614">
    <property type="taxonomic scope" value="Bacteria"/>
</dbReference>
<dbReference type="HOGENOM" id="CLU_038034_2_5_6"/>
<dbReference type="InParanoid" id="P37028"/>
<dbReference type="OMA" id="WQGINLE"/>
<dbReference type="OrthoDB" id="6495095at2"/>
<dbReference type="PhylomeDB" id="P37028"/>
<dbReference type="BioCyc" id="EcoCyc:EG12334-MONOMER"/>
<dbReference type="BioCyc" id="MetaCyc:EG12334-MONOMER"/>
<dbReference type="BRENDA" id="7.6.2.8">
    <property type="organism ID" value="2026"/>
</dbReference>
<dbReference type="EvolutionaryTrace" id="P37028"/>
<dbReference type="PRO" id="PR:P37028"/>
<dbReference type="Proteomes" id="UP000000625">
    <property type="component" value="Chromosome"/>
</dbReference>
<dbReference type="GO" id="GO:1990191">
    <property type="term" value="C:cobalamin transport complex"/>
    <property type="evidence" value="ECO:0000353"/>
    <property type="project" value="ComplexPortal"/>
</dbReference>
<dbReference type="GO" id="GO:0016020">
    <property type="term" value="C:membrane"/>
    <property type="evidence" value="ECO:0000314"/>
    <property type="project" value="ComplexPortal"/>
</dbReference>
<dbReference type="GO" id="GO:0030288">
    <property type="term" value="C:outer membrane-bounded periplasmic space"/>
    <property type="evidence" value="ECO:0000314"/>
    <property type="project" value="EcoCyc"/>
</dbReference>
<dbReference type="GO" id="GO:0042597">
    <property type="term" value="C:periplasmic space"/>
    <property type="evidence" value="ECO:0000314"/>
    <property type="project" value="EcoliWiki"/>
</dbReference>
<dbReference type="GO" id="GO:0031419">
    <property type="term" value="F:cobalamin binding"/>
    <property type="evidence" value="ECO:0000314"/>
    <property type="project" value="EcoliWiki"/>
</dbReference>
<dbReference type="GO" id="GO:0015889">
    <property type="term" value="P:cobalamin transport"/>
    <property type="evidence" value="ECO:0000314"/>
    <property type="project" value="EcoCyc"/>
</dbReference>
<dbReference type="CDD" id="cd01144">
    <property type="entry name" value="BtuF"/>
    <property type="match status" value="1"/>
</dbReference>
<dbReference type="DisProt" id="DP02169"/>
<dbReference type="FunFam" id="3.40.50.1980:FF:000007">
    <property type="entry name" value="Vitamin B12-binding protein"/>
    <property type="match status" value="1"/>
</dbReference>
<dbReference type="Gene3D" id="3.40.50.1980">
    <property type="entry name" value="Nitrogenase molybdenum iron protein domain"/>
    <property type="match status" value="2"/>
</dbReference>
<dbReference type="HAMAP" id="MF_01000">
    <property type="entry name" value="BtuF"/>
    <property type="match status" value="1"/>
</dbReference>
<dbReference type="InterPro" id="IPR050902">
    <property type="entry name" value="ABC_Transporter_SBP"/>
</dbReference>
<dbReference type="InterPro" id="IPR002491">
    <property type="entry name" value="ABC_transptr_periplasmic_BD"/>
</dbReference>
<dbReference type="InterPro" id="IPR023544">
    <property type="entry name" value="ABC_transptr_vit_B12-bd"/>
</dbReference>
<dbReference type="InterPro" id="IPR054828">
    <property type="entry name" value="Vit_B12_bind_prot"/>
</dbReference>
<dbReference type="NCBIfam" id="NF002894">
    <property type="entry name" value="PRK03379.1"/>
    <property type="match status" value="1"/>
</dbReference>
<dbReference type="NCBIfam" id="NF038402">
    <property type="entry name" value="TroA_like"/>
    <property type="match status" value="1"/>
</dbReference>
<dbReference type="PANTHER" id="PTHR30535:SF34">
    <property type="entry name" value="MOLYBDATE-BINDING PROTEIN MOLA"/>
    <property type="match status" value="1"/>
</dbReference>
<dbReference type="PANTHER" id="PTHR30535">
    <property type="entry name" value="VITAMIN B12-BINDING PROTEIN"/>
    <property type="match status" value="1"/>
</dbReference>
<dbReference type="Pfam" id="PF01497">
    <property type="entry name" value="Peripla_BP_2"/>
    <property type="match status" value="1"/>
</dbReference>
<dbReference type="SUPFAM" id="SSF53807">
    <property type="entry name" value="Helical backbone' metal receptor"/>
    <property type="match status" value="1"/>
</dbReference>
<dbReference type="PROSITE" id="PS50983">
    <property type="entry name" value="FE_B12_PBP"/>
    <property type="match status" value="1"/>
</dbReference>
<reference key="1">
    <citation type="journal article" date="1994" name="Nucleic Acids Res.">
        <title>Systematic sequencing of the Escherichia coli genome: analysis of the 2.4-4.1 min (110,917-193,643 bp) region.</title>
        <authorList>
            <person name="Fujita N."/>
            <person name="Mori H."/>
            <person name="Yura T."/>
            <person name="Ishihama A."/>
        </authorList>
    </citation>
    <scope>NUCLEOTIDE SEQUENCE [LARGE SCALE GENOMIC DNA]</scope>
    <source>
        <strain>K12 / W3110 / ATCC 27325 / DSM 5911</strain>
    </source>
</reference>
<reference key="2">
    <citation type="submission" date="1997-01" db="EMBL/GenBank/DDBJ databases">
        <title>Sequence of minutes 4-25 of Escherichia coli.</title>
        <authorList>
            <person name="Chung E."/>
            <person name="Allen E."/>
            <person name="Araujo R."/>
            <person name="Aparicio A.M."/>
            <person name="Davis K."/>
            <person name="Duncan M."/>
            <person name="Federspiel N."/>
            <person name="Hyman R."/>
            <person name="Kalman S."/>
            <person name="Komp C."/>
            <person name="Kurdi O."/>
            <person name="Lew H."/>
            <person name="Lin D."/>
            <person name="Namath A."/>
            <person name="Oefner P."/>
            <person name="Roberts D."/>
            <person name="Schramm S."/>
            <person name="Davis R.W."/>
        </authorList>
    </citation>
    <scope>NUCLEOTIDE SEQUENCE [LARGE SCALE GENOMIC DNA]</scope>
    <source>
        <strain>K12 / MG1655 / ATCC 47076</strain>
    </source>
</reference>
<reference key="3">
    <citation type="journal article" date="1997" name="Science">
        <title>The complete genome sequence of Escherichia coli K-12.</title>
        <authorList>
            <person name="Blattner F.R."/>
            <person name="Plunkett G. III"/>
            <person name="Bloch C.A."/>
            <person name="Perna N.T."/>
            <person name="Burland V."/>
            <person name="Riley M."/>
            <person name="Collado-Vides J."/>
            <person name="Glasner J.D."/>
            <person name="Rode C.K."/>
            <person name="Mayhew G.F."/>
            <person name="Gregor J."/>
            <person name="Davis N.W."/>
            <person name="Kirkpatrick H.A."/>
            <person name="Goeden M.A."/>
            <person name="Rose D.J."/>
            <person name="Mau B."/>
            <person name="Shao Y."/>
        </authorList>
    </citation>
    <scope>NUCLEOTIDE SEQUENCE [LARGE SCALE GENOMIC DNA]</scope>
    <source>
        <strain>K12 / MG1655 / ATCC 47076</strain>
    </source>
</reference>
<reference key="4">
    <citation type="journal article" date="2006" name="Mol. Syst. Biol.">
        <title>Highly accurate genome sequences of Escherichia coli K-12 strains MG1655 and W3110.</title>
        <authorList>
            <person name="Hayashi K."/>
            <person name="Morooka N."/>
            <person name="Yamamoto Y."/>
            <person name="Fujita K."/>
            <person name="Isono K."/>
            <person name="Choi S."/>
            <person name="Ohtsubo E."/>
            <person name="Baba T."/>
            <person name="Wanner B.L."/>
            <person name="Mori H."/>
            <person name="Horiuchi T."/>
        </authorList>
    </citation>
    <scope>NUCLEOTIDE SEQUENCE [LARGE SCALE GENOMIC DNA]</scope>
    <scope>SEQUENCE REVISION TO 208</scope>
    <source>
        <strain>K12 / W3110 / ATCC 27325 / DSM 5911</strain>
    </source>
</reference>
<reference key="5">
    <citation type="journal article" date="2002" name="J. Bacteriol.">
        <title>Identification of the periplasmic cobalamin-binding protein BtuF of Escherichia coli.</title>
        <authorList>
            <person name="Cadieux N."/>
            <person name="Bradbeer C."/>
            <person name="Reeger-Schneider E."/>
            <person name="Koester W."/>
            <person name="Mohanty A.K."/>
            <person name="Wiener M.C."/>
            <person name="Kadner R.J."/>
        </authorList>
    </citation>
    <scope>PROTEIN SEQUENCE OF 1-6 (PRECURSOR PROTEIN)</scope>
    <scope>PROTEIN SEQUENCE OF 23-27</scope>
    <scope>FUNCTION</scope>
    <scope>SUBCELLULAR LOCATION</scope>
    <source>
        <strain>K12 / MC4100 / ATCC 35695 / DSM 6574</strain>
    </source>
</reference>
<reference evidence="7" key="6">
    <citation type="journal article" date="2002" name="Proc. Natl. Acad. Sci. U.S.A.">
        <title>The structure of Escherichia coli BtuF and binding to its cognate ATP binding cassette transporter.</title>
        <authorList>
            <person name="Borths E.L."/>
            <person name="Locher K.P."/>
            <person name="Lee A.T."/>
            <person name="Rees D.C."/>
        </authorList>
    </citation>
    <scope>X-RAY CRYSTALLOGRAPHY (2.0 ANGSTROMS) OF 23-266 IN COMPLEX WITH CYANOCOB(III)ALAMIN</scope>
    <scope>SUBUNIT</scope>
</reference>
<reference evidence="8 9" key="7">
    <citation type="journal article" date="2003" name="J. Biol. Chem.">
        <title>Crystal structures of the BtuF periplasmic-binding protein for vitamin B12 suggest a functionally important reduction in protein mobility upon ligand binding.</title>
        <authorList>
            <person name="Karpowich N.K."/>
            <person name="Huang H.H."/>
            <person name="Smith P.C."/>
            <person name="Hunt J.F."/>
        </authorList>
    </citation>
    <scope>X-RAY CRYSTALLOGRAPHY (2.0 ANGSTROMS) OF 23-266 IN COMPLEX WITH CYANOCOB(III)ALAMIN</scope>
</reference>
<sequence length="266" mass="29367">MAKSLFRALVALSFLAPLWLNAAPRVITLSPANTELAFAAGITPVGVSSYSDYPPQAQKIEQVSTWQGMNLERIVALKPDLVIAWRGGNAERQVDQLASLGIKVMWVDATSIEQIANALRQLAPWSPQPDKAEQAAQSLLDQYAQLKAQYADKPKKRVFLQFGINPPFTSGKESIQNQVLEVCGGENIFKDSRVPWPQVSREQVLARSPQAIVITGGPDQIPKIKQYWGEQLKIPVIPLTSDWFERASPRIILAAQQLCNALSQVD</sequence>
<comment type="function">
    <text evidence="1 2">Part of the ABC transporter complex BtuCDF involved in vitamin B12 import. Binds vitamin B12 and delivers it to the periplasmic surface of BtuC.</text>
</comment>
<comment type="subunit">
    <text evidence="1 3 4">The complex is composed of two ATP-binding proteins (BtuD), two transmembrane proteins (BtuC) and a solute-binding protein (BtuF).</text>
</comment>
<comment type="interaction">
    <interactant intactId="EBI-1118724">
        <id>P37028</id>
    </interactant>
    <interactant intactId="EBI-1033427">
        <id>P06609</id>
        <label>btuC</label>
    </interactant>
    <organismsDiffer>false</organismsDiffer>
    <experiments>10</experiments>
</comment>
<comment type="subcellular location">
    <subcellularLocation>
        <location evidence="1 2">Periplasm</location>
    </subcellularLocation>
</comment>
<comment type="miscellaneous">
    <text evidence="4">Vitamin B12 is bound in a deep cleft formed at the interface between the two lobes of BtuF.</text>
</comment>
<comment type="similarity">
    <text evidence="1 5">Belongs to the BtuF family.</text>
</comment>
<gene>
    <name type="primary">btuF</name>
    <name type="synonym">yadT</name>
    <name type="ordered locus">b0158</name>
    <name type="ordered locus">JW0154</name>
</gene>
<keyword id="KW-0002">3D-structure</keyword>
<keyword id="KW-0903">Direct protein sequencing</keyword>
<keyword id="KW-1015">Disulfide bond</keyword>
<keyword id="KW-0574">Periplasm</keyword>
<keyword id="KW-1185">Reference proteome</keyword>
<keyword id="KW-0732">Signal</keyword>
<keyword id="KW-0813">Transport</keyword>
<evidence type="ECO:0000255" key="1">
    <source>
        <dbReference type="HAMAP-Rule" id="MF_01000"/>
    </source>
</evidence>
<evidence type="ECO:0000269" key="2">
    <source>
    </source>
</evidence>
<evidence type="ECO:0000269" key="3">
    <source>
    </source>
</evidence>
<evidence type="ECO:0000269" key="4">
    <source>
    </source>
</evidence>
<evidence type="ECO:0000305" key="5"/>
<evidence type="ECO:0000305" key="6">
    <source>
    </source>
</evidence>
<evidence type="ECO:0007744" key="7">
    <source>
        <dbReference type="PDB" id="1N2Z"/>
    </source>
</evidence>
<evidence type="ECO:0007744" key="8">
    <source>
        <dbReference type="PDB" id="1N4A"/>
    </source>
</evidence>
<evidence type="ECO:0007744" key="9">
    <source>
        <dbReference type="PDB" id="1N4D"/>
    </source>
</evidence>
<evidence type="ECO:0007829" key="10">
    <source>
        <dbReference type="PDB" id="1N2Z"/>
    </source>
</evidence>
<evidence type="ECO:0007829" key="11">
    <source>
        <dbReference type="PDB" id="1N4A"/>
    </source>
</evidence>
<evidence type="ECO:0007829" key="12">
    <source>
        <dbReference type="PDB" id="5M29"/>
    </source>
</evidence>
<evidence type="ECO:0007829" key="13">
    <source>
        <dbReference type="PDB" id="5M2Q"/>
    </source>
</evidence>
<evidence type="ECO:0007829" key="14">
    <source>
        <dbReference type="PDB" id="5M34"/>
    </source>
</evidence>
<evidence type="ECO:0007829" key="15">
    <source>
        <dbReference type="PDB" id="5OVW"/>
    </source>
</evidence>
<organism>
    <name type="scientific">Escherichia coli (strain K12)</name>
    <dbReference type="NCBI Taxonomy" id="83333"/>
    <lineage>
        <taxon>Bacteria</taxon>
        <taxon>Pseudomonadati</taxon>
        <taxon>Pseudomonadota</taxon>
        <taxon>Gammaproteobacteria</taxon>
        <taxon>Enterobacterales</taxon>
        <taxon>Enterobacteriaceae</taxon>
        <taxon>Escherichia</taxon>
    </lineage>
</organism>